<accession>Q1I4F1</accession>
<feature type="chain" id="PRO_0000336722" description="Probable nicotinate-nucleotide adenylyltransferase">
    <location>
        <begin position="1"/>
        <end position="219"/>
    </location>
</feature>
<evidence type="ECO:0000255" key="1">
    <source>
        <dbReference type="HAMAP-Rule" id="MF_00244"/>
    </source>
</evidence>
<name>NADD_PSEE4</name>
<dbReference type="EC" id="2.7.7.18" evidence="1"/>
<dbReference type="EMBL" id="CT573326">
    <property type="protein sequence ID" value="CAK17485.1"/>
    <property type="molecule type" value="Genomic_DNA"/>
</dbReference>
<dbReference type="RefSeq" id="WP_011535847.1">
    <property type="nucleotide sequence ID" value="NC_008027.1"/>
</dbReference>
<dbReference type="SMR" id="Q1I4F1"/>
<dbReference type="STRING" id="384676.PSEEN4829"/>
<dbReference type="GeneID" id="32807788"/>
<dbReference type="KEGG" id="pen:PSEEN4829"/>
<dbReference type="eggNOG" id="COG1057">
    <property type="taxonomic scope" value="Bacteria"/>
</dbReference>
<dbReference type="HOGENOM" id="CLU_069765_0_0_6"/>
<dbReference type="OrthoDB" id="5295945at2"/>
<dbReference type="UniPathway" id="UPA00253">
    <property type="reaction ID" value="UER00332"/>
</dbReference>
<dbReference type="Proteomes" id="UP000000658">
    <property type="component" value="Chromosome"/>
</dbReference>
<dbReference type="GO" id="GO:0005524">
    <property type="term" value="F:ATP binding"/>
    <property type="evidence" value="ECO:0007669"/>
    <property type="project" value="UniProtKB-KW"/>
</dbReference>
<dbReference type="GO" id="GO:0004515">
    <property type="term" value="F:nicotinate-nucleotide adenylyltransferase activity"/>
    <property type="evidence" value="ECO:0007669"/>
    <property type="project" value="UniProtKB-UniRule"/>
</dbReference>
<dbReference type="GO" id="GO:0009435">
    <property type="term" value="P:NAD biosynthetic process"/>
    <property type="evidence" value="ECO:0007669"/>
    <property type="project" value="UniProtKB-UniRule"/>
</dbReference>
<dbReference type="CDD" id="cd02165">
    <property type="entry name" value="NMNAT"/>
    <property type="match status" value="1"/>
</dbReference>
<dbReference type="Gene3D" id="3.40.50.620">
    <property type="entry name" value="HUPs"/>
    <property type="match status" value="1"/>
</dbReference>
<dbReference type="HAMAP" id="MF_00244">
    <property type="entry name" value="NaMN_adenylyltr"/>
    <property type="match status" value="1"/>
</dbReference>
<dbReference type="InterPro" id="IPR004821">
    <property type="entry name" value="Cyt_trans-like"/>
</dbReference>
<dbReference type="InterPro" id="IPR005248">
    <property type="entry name" value="NadD/NMNAT"/>
</dbReference>
<dbReference type="InterPro" id="IPR014729">
    <property type="entry name" value="Rossmann-like_a/b/a_fold"/>
</dbReference>
<dbReference type="NCBIfam" id="TIGR00125">
    <property type="entry name" value="cyt_tran_rel"/>
    <property type="match status" value="1"/>
</dbReference>
<dbReference type="NCBIfam" id="TIGR00482">
    <property type="entry name" value="nicotinate (nicotinamide) nucleotide adenylyltransferase"/>
    <property type="match status" value="1"/>
</dbReference>
<dbReference type="NCBIfam" id="NF000839">
    <property type="entry name" value="PRK00071.1-1"/>
    <property type="match status" value="1"/>
</dbReference>
<dbReference type="NCBIfam" id="NF000840">
    <property type="entry name" value="PRK00071.1-3"/>
    <property type="match status" value="1"/>
</dbReference>
<dbReference type="PANTHER" id="PTHR39321">
    <property type="entry name" value="NICOTINATE-NUCLEOTIDE ADENYLYLTRANSFERASE-RELATED"/>
    <property type="match status" value="1"/>
</dbReference>
<dbReference type="PANTHER" id="PTHR39321:SF3">
    <property type="entry name" value="PHOSPHOPANTETHEINE ADENYLYLTRANSFERASE"/>
    <property type="match status" value="1"/>
</dbReference>
<dbReference type="Pfam" id="PF01467">
    <property type="entry name" value="CTP_transf_like"/>
    <property type="match status" value="1"/>
</dbReference>
<dbReference type="SUPFAM" id="SSF52374">
    <property type="entry name" value="Nucleotidylyl transferase"/>
    <property type="match status" value="1"/>
</dbReference>
<keyword id="KW-0067">ATP-binding</keyword>
<keyword id="KW-0520">NAD</keyword>
<keyword id="KW-0547">Nucleotide-binding</keyword>
<keyword id="KW-0548">Nucleotidyltransferase</keyword>
<keyword id="KW-0662">Pyridine nucleotide biosynthesis</keyword>
<keyword id="KW-0808">Transferase</keyword>
<organism>
    <name type="scientific">Pseudomonas entomophila (strain L48)</name>
    <dbReference type="NCBI Taxonomy" id="384676"/>
    <lineage>
        <taxon>Bacteria</taxon>
        <taxon>Pseudomonadati</taxon>
        <taxon>Pseudomonadota</taxon>
        <taxon>Gammaproteobacteria</taxon>
        <taxon>Pseudomonadales</taxon>
        <taxon>Pseudomonadaceae</taxon>
        <taxon>Pseudomonas</taxon>
    </lineage>
</organism>
<sequence length="219" mass="24222">MSSALAVRRVGILGGTFDPVHIGHLRSALEVAEFMRLDELRLLPNARPPHRDTPQVSAQDRLAMVRDAVAGVGGLSVDDRELARDKPSYTIDTLESIRAELNTHDQLFLVLGWDAFCGLPSWHRWEELLQHCHILVLQRPDADVEPPDELRNLLAARSESDPTAMSGPAGHISFVWQTPLAVSATQIRQLLASGKSARFLVPDAVLAYIEAHDLYRASN</sequence>
<protein>
    <recommendedName>
        <fullName evidence="1">Probable nicotinate-nucleotide adenylyltransferase</fullName>
        <ecNumber evidence="1">2.7.7.18</ecNumber>
    </recommendedName>
    <alternativeName>
        <fullName evidence="1">Deamido-NAD(+) diphosphorylase</fullName>
    </alternativeName>
    <alternativeName>
        <fullName evidence="1">Deamido-NAD(+) pyrophosphorylase</fullName>
    </alternativeName>
    <alternativeName>
        <fullName evidence="1">Nicotinate mononucleotide adenylyltransferase</fullName>
        <shortName evidence="1">NaMN adenylyltransferase</shortName>
    </alternativeName>
</protein>
<reference key="1">
    <citation type="journal article" date="2006" name="Nat. Biotechnol.">
        <title>Complete genome sequence of the entomopathogenic and metabolically versatile soil bacterium Pseudomonas entomophila.</title>
        <authorList>
            <person name="Vodovar N."/>
            <person name="Vallenet D."/>
            <person name="Cruveiller S."/>
            <person name="Rouy Z."/>
            <person name="Barbe V."/>
            <person name="Acosta C."/>
            <person name="Cattolico L."/>
            <person name="Jubin C."/>
            <person name="Lajus A."/>
            <person name="Segurens B."/>
            <person name="Vacherie B."/>
            <person name="Wincker P."/>
            <person name="Weissenbach J."/>
            <person name="Lemaitre B."/>
            <person name="Medigue C."/>
            <person name="Boccard F."/>
        </authorList>
    </citation>
    <scope>NUCLEOTIDE SEQUENCE [LARGE SCALE GENOMIC DNA]</scope>
    <source>
        <strain>L48</strain>
    </source>
</reference>
<comment type="function">
    <text evidence="1">Catalyzes the reversible adenylation of nicotinate mononucleotide (NaMN) to nicotinic acid adenine dinucleotide (NaAD).</text>
</comment>
<comment type="catalytic activity">
    <reaction evidence="1">
        <text>nicotinate beta-D-ribonucleotide + ATP + H(+) = deamido-NAD(+) + diphosphate</text>
        <dbReference type="Rhea" id="RHEA:22860"/>
        <dbReference type="ChEBI" id="CHEBI:15378"/>
        <dbReference type="ChEBI" id="CHEBI:30616"/>
        <dbReference type="ChEBI" id="CHEBI:33019"/>
        <dbReference type="ChEBI" id="CHEBI:57502"/>
        <dbReference type="ChEBI" id="CHEBI:58437"/>
        <dbReference type="EC" id="2.7.7.18"/>
    </reaction>
</comment>
<comment type="pathway">
    <text evidence="1">Cofactor biosynthesis; NAD(+) biosynthesis; deamido-NAD(+) from nicotinate D-ribonucleotide: step 1/1.</text>
</comment>
<comment type="similarity">
    <text evidence="1">Belongs to the NadD family.</text>
</comment>
<proteinExistence type="inferred from homology"/>
<gene>
    <name evidence="1" type="primary">nadD</name>
    <name type="ordered locus">PSEEN4829</name>
</gene>